<feature type="initiator methionine" description="Removed" evidence="1">
    <location>
        <position position="1"/>
    </location>
</feature>
<feature type="chain" id="PRO_0000096313" description="NADPH:quinone oxidoreductase MdaB">
    <location>
        <begin position="2"/>
        <end position="193"/>
    </location>
</feature>
<feature type="binding site" evidence="2">
    <location>
        <begin position="16"/>
        <end position="23"/>
    </location>
    <ligand>
        <name>FAD</name>
        <dbReference type="ChEBI" id="CHEBI:57692"/>
    </ligand>
</feature>
<feature type="binding site" evidence="2">
    <location>
        <begin position="69"/>
        <end position="72"/>
    </location>
    <ligand>
        <name>FAD</name>
        <dbReference type="ChEBI" id="CHEBI:57692"/>
    </ligand>
</feature>
<feature type="binding site" evidence="2">
    <location>
        <position position="108"/>
    </location>
    <ligand>
        <name>FAD</name>
        <dbReference type="ChEBI" id="CHEBI:57692"/>
    </ligand>
</feature>
<feature type="binding site" evidence="2">
    <location>
        <begin position="124"/>
        <end position="127"/>
    </location>
    <ligand>
        <name>FAD</name>
        <dbReference type="ChEBI" id="CHEBI:57692"/>
    </ligand>
</feature>
<sequence>MSNILIINGAKKFAHSNGQLNDTLTEVADGTLRDLGHDVRIVRADSDYDVKAEVQNFLWADVVIWQMPGWWMGAPWTVKKYIDDVFTEGHGTLYASDGRTRKDPSKKYGSGGLVQGKKYMLSLTWNAPMEAFTEKDQFFHGVGVDGVYLPFHKANQFLGMEPLPTFIANDVIKMPDVPRYTEEYRKHLVEIFG</sequence>
<organism>
    <name type="scientific">Escherichia coli O6:H1 (strain CFT073 / ATCC 700928 / UPEC)</name>
    <dbReference type="NCBI Taxonomy" id="199310"/>
    <lineage>
        <taxon>Bacteria</taxon>
        <taxon>Pseudomonadati</taxon>
        <taxon>Pseudomonadota</taxon>
        <taxon>Gammaproteobacteria</taxon>
        <taxon>Enterobacterales</taxon>
        <taxon>Enterobacteriaceae</taxon>
        <taxon>Escherichia</taxon>
    </lineage>
</organism>
<accession>P0AEY6</accession>
<accession>P40717</accession>
<dbReference type="EC" id="1.6.5.10" evidence="1"/>
<dbReference type="EMBL" id="AE014075">
    <property type="protein sequence ID" value="AAN82212.1"/>
    <property type="molecule type" value="Genomic_DNA"/>
</dbReference>
<dbReference type="RefSeq" id="WP_000065430.1">
    <property type="nucleotide sequence ID" value="NZ_CP051263.1"/>
</dbReference>
<dbReference type="SMR" id="P0AEY6"/>
<dbReference type="STRING" id="199310.c3768"/>
<dbReference type="GeneID" id="86861166"/>
<dbReference type="KEGG" id="ecc:c3768"/>
<dbReference type="eggNOG" id="COG2249">
    <property type="taxonomic scope" value="Bacteria"/>
</dbReference>
<dbReference type="HOGENOM" id="CLU_083846_0_0_6"/>
<dbReference type="BioCyc" id="ECOL199310:C3768-MONOMER"/>
<dbReference type="Proteomes" id="UP000001410">
    <property type="component" value="Chromosome"/>
</dbReference>
<dbReference type="GO" id="GO:0005737">
    <property type="term" value="C:cytoplasm"/>
    <property type="evidence" value="ECO:0007669"/>
    <property type="project" value="UniProtKB-SubCell"/>
</dbReference>
<dbReference type="GO" id="GO:0008753">
    <property type="term" value="F:NADPH dehydrogenase (quinone) activity"/>
    <property type="evidence" value="ECO:0007669"/>
    <property type="project" value="UniProtKB-EC"/>
</dbReference>
<dbReference type="FunFam" id="3.40.50.360:FF:000007">
    <property type="entry name" value="Drug activity modulator B"/>
    <property type="match status" value="1"/>
</dbReference>
<dbReference type="Gene3D" id="3.40.50.360">
    <property type="match status" value="1"/>
</dbReference>
<dbReference type="InterPro" id="IPR003680">
    <property type="entry name" value="Flavodoxin_fold"/>
</dbReference>
<dbReference type="InterPro" id="IPR029039">
    <property type="entry name" value="Flavoprotein-like_sf"/>
</dbReference>
<dbReference type="InterPro" id="IPR052397">
    <property type="entry name" value="NADPH-QR_MdaB"/>
</dbReference>
<dbReference type="PANTHER" id="PTHR46305">
    <property type="match status" value="1"/>
</dbReference>
<dbReference type="PANTHER" id="PTHR46305:SF3">
    <property type="entry name" value="NADPH:QUINONE OXIDOREDUCTASE MDAB"/>
    <property type="match status" value="1"/>
</dbReference>
<dbReference type="Pfam" id="PF02525">
    <property type="entry name" value="Flavodoxin_2"/>
    <property type="match status" value="1"/>
</dbReference>
<dbReference type="SUPFAM" id="SSF52218">
    <property type="entry name" value="Flavoproteins"/>
    <property type="match status" value="1"/>
</dbReference>
<reference key="1">
    <citation type="journal article" date="2002" name="Proc. Natl. Acad. Sci. U.S.A.">
        <title>Extensive mosaic structure revealed by the complete genome sequence of uropathogenic Escherichia coli.</title>
        <authorList>
            <person name="Welch R.A."/>
            <person name="Burland V."/>
            <person name="Plunkett G. III"/>
            <person name="Redford P."/>
            <person name="Roesch P."/>
            <person name="Rasko D."/>
            <person name="Buckles E.L."/>
            <person name="Liou S.-R."/>
            <person name="Boutin A."/>
            <person name="Hackett J."/>
            <person name="Stroud D."/>
            <person name="Mayhew G.F."/>
            <person name="Rose D.J."/>
            <person name="Zhou S."/>
            <person name="Schwartz D.C."/>
            <person name="Perna N.T."/>
            <person name="Mobley H.L.T."/>
            <person name="Donnenberg M.S."/>
            <person name="Blattner F.R."/>
        </authorList>
    </citation>
    <scope>NUCLEOTIDE SEQUENCE [LARGE SCALE GENOMIC DNA]</scope>
    <source>
        <strain>CFT073 / ATCC 700928 / UPEC</strain>
    </source>
</reference>
<name>MDAB_ECOL6</name>
<proteinExistence type="inferred from homology"/>
<protein>
    <recommendedName>
        <fullName evidence="1">NADPH:quinone oxidoreductase MdaB</fullName>
        <ecNumber evidence="1">1.6.5.10</ecNumber>
    </recommendedName>
    <alternativeName>
        <fullName evidence="1">Modulator of drug activity B</fullName>
    </alternativeName>
</protein>
<gene>
    <name type="primary">mdaB</name>
    <name type="ordered locus">c3768</name>
</gene>
<comment type="function">
    <text evidence="1">NADPH-specific quinone reductase.</text>
</comment>
<comment type="catalytic activity">
    <reaction evidence="1">
        <text>a quinone + NADPH + H(+) = a quinol + NADP(+)</text>
        <dbReference type="Rhea" id="RHEA:46164"/>
        <dbReference type="ChEBI" id="CHEBI:15378"/>
        <dbReference type="ChEBI" id="CHEBI:24646"/>
        <dbReference type="ChEBI" id="CHEBI:57783"/>
        <dbReference type="ChEBI" id="CHEBI:58349"/>
        <dbReference type="ChEBI" id="CHEBI:132124"/>
        <dbReference type="EC" id="1.6.5.10"/>
    </reaction>
</comment>
<comment type="cofactor">
    <cofactor evidence="1">
        <name>FAD</name>
        <dbReference type="ChEBI" id="CHEBI:57692"/>
    </cofactor>
</comment>
<comment type="subunit">
    <text evidence="2">Homodimer.</text>
</comment>
<comment type="subcellular location">
    <subcellularLocation>
        <location evidence="1">Cytoplasm</location>
    </subcellularLocation>
</comment>
<comment type="similarity">
    <text evidence="3">Belongs to the oxidoreductase MdaB family.</text>
</comment>
<evidence type="ECO:0000250" key="1">
    <source>
        <dbReference type="UniProtKB" id="P0AEY5"/>
    </source>
</evidence>
<evidence type="ECO:0000250" key="2">
    <source>
        <dbReference type="UniProtKB" id="P0AEY7"/>
    </source>
</evidence>
<evidence type="ECO:0000305" key="3"/>
<keyword id="KW-0963">Cytoplasm</keyword>
<keyword id="KW-0274">FAD</keyword>
<keyword id="KW-0285">Flavoprotein</keyword>
<keyword id="KW-0560">Oxidoreductase</keyword>
<keyword id="KW-1185">Reference proteome</keyword>